<protein>
    <recommendedName>
        <fullName evidence="1">Histidinol dehydrogenase</fullName>
        <shortName evidence="1">HDH</shortName>
        <ecNumber evidence="1">1.1.1.23</ecNumber>
    </recommendedName>
</protein>
<gene>
    <name evidence="1" type="primary">hisD</name>
    <name type="ordered locus">SMU_1270</name>
</gene>
<keyword id="KW-0028">Amino-acid biosynthesis</keyword>
<keyword id="KW-0368">Histidine biosynthesis</keyword>
<keyword id="KW-0479">Metal-binding</keyword>
<keyword id="KW-0520">NAD</keyword>
<keyword id="KW-0560">Oxidoreductase</keyword>
<keyword id="KW-1185">Reference proteome</keyword>
<keyword id="KW-0862">Zinc</keyword>
<reference key="1">
    <citation type="journal article" date="2002" name="Proc. Natl. Acad. Sci. U.S.A.">
        <title>Genome sequence of Streptococcus mutans UA159, a cariogenic dental pathogen.</title>
        <authorList>
            <person name="Ajdic D.J."/>
            <person name="McShan W.M."/>
            <person name="McLaughlin R.E."/>
            <person name="Savic G."/>
            <person name="Chang J."/>
            <person name="Carson M.B."/>
            <person name="Primeaux C."/>
            <person name="Tian R."/>
            <person name="Kenton S."/>
            <person name="Jia H.G."/>
            <person name="Lin S.P."/>
            <person name="Qian Y."/>
            <person name="Li S."/>
            <person name="Zhu H."/>
            <person name="Najar F.Z."/>
            <person name="Lai H."/>
            <person name="White J."/>
            <person name="Roe B.A."/>
            <person name="Ferretti J.J."/>
        </authorList>
    </citation>
    <scope>NUCLEOTIDE SEQUENCE [LARGE SCALE GENOMIC DNA]</scope>
    <source>
        <strain>ATCC 700610 / UA159</strain>
    </source>
</reference>
<proteinExistence type="inferred from homology"/>
<organism>
    <name type="scientific">Streptococcus mutans serotype c (strain ATCC 700610 / UA159)</name>
    <dbReference type="NCBI Taxonomy" id="210007"/>
    <lineage>
        <taxon>Bacteria</taxon>
        <taxon>Bacillati</taxon>
        <taxon>Bacillota</taxon>
        <taxon>Bacilli</taxon>
        <taxon>Lactobacillales</taxon>
        <taxon>Streptococcaceae</taxon>
        <taxon>Streptococcus</taxon>
    </lineage>
</organism>
<dbReference type="EC" id="1.1.1.23" evidence="1"/>
<dbReference type="EMBL" id="AE014133">
    <property type="protein sequence ID" value="AAN58952.1"/>
    <property type="molecule type" value="Genomic_DNA"/>
</dbReference>
<dbReference type="RefSeq" id="NP_721646.1">
    <property type="nucleotide sequence ID" value="NC_004350.2"/>
</dbReference>
<dbReference type="RefSeq" id="WP_002263174.1">
    <property type="nucleotide sequence ID" value="NC_004350.2"/>
</dbReference>
<dbReference type="SMR" id="Q8DTQ7"/>
<dbReference type="STRING" id="210007.SMU_1270"/>
<dbReference type="KEGG" id="smu:SMU_1270"/>
<dbReference type="PATRIC" id="fig|210007.7.peg.1139"/>
<dbReference type="eggNOG" id="COG0141">
    <property type="taxonomic scope" value="Bacteria"/>
</dbReference>
<dbReference type="HOGENOM" id="CLU_006732_3_3_9"/>
<dbReference type="OrthoDB" id="9805269at2"/>
<dbReference type="PhylomeDB" id="Q8DTQ7"/>
<dbReference type="UniPathway" id="UPA00031">
    <property type="reaction ID" value="UER00014"/>
</dbReference>
<dbReference type="Proteomes" id="UP000002512">
    <property type="component" value="Chromosome"/>
</dbReference>
<dbReference type="GO" id="GO:0005829">
    <property type="term" value="C:cytosol"/>
    <property type="evidence" value="ECO:0007669"/>
    <property type="project" value="TreeGrafter"/>
</dbReference>
<dbReference type="GO" id="GO:0004399">
    <property type="term" value="F:histidinol dehydrogenase activity"/>
    <property type="evidence" value="ECO:0007669"/>
    <property type="project" value="UniProtKB-UniRule"/>
</dbReference>
<dbReference type="GO" id="GO:0051287">
    <property type="term" value="F:NAD binding"/>
    <property type="evidence" value="ECO:0007669"/>
    <property type="project" value="InterPro"/>
</dbReference>
<dbReference type="GO" id="GO:0008270">
    <property type="term" value="F:zinc ion binding"/>
    <property type="evidence" value="ECO:0007669"/>
    <property type="project" value="UniProtKB-UniRule"/>
</dbReference>
<dbReference type="GO" id="GO:0000105">
    <property type="term" value="P:L-histidine biosynthetic process"/>
    <property type="evidence" value="ECO:0007669"/>
    <property type="project" value="UniProtKB-UniRule"/>
</dbReference>
<dbReference type="CDD" id="cd06572">
    <property type="entry name" value="Histidinol_dh"/>
    <property type="match status" value="1"/>
</dbReference>
<dbReference type="FunFam" id="3.40.50.1980:FF:000001">
    <property type="entry name" value="Histidinol dehydrogenase"/>
    <property type="match status" value="1"/>
</dbReference>
<dbReference type="FunFam" id="3.40.50.1980:FF:000026">
    <property type="entry name" value="Histidinol dehydrogenase"/>
    <property type="match status" value="1"/>
</dbReference>
<dbReference type="Gene3D" id="1.20.5.1300">
    <property type="match status" value="1"/>
</dbReference>
<dbReference type="Gene3D" id="3.40.50.1980">
    <property type="entry name" value="Nitrogenase molybdenum iron protein domain"/>
    <property type="match status" value="2"/>
</dbReference>
<dbReference type="HAMAP" id="MF_01024">
    <property type="entry name" value="HisD"/>
    <property type="match status" value="1"/>
</dbReference>
<dbReference type="InterPro" id="IPR016161">
    <property type="entry name" value="Ald_DH/histidinol_DH"/>
</dbReference>
<dbReference type="InterPro" id="IPR001692">
    <property type="entry name" value="Histidinol_DH_CS"/>
</dbReference>
<dbReference type="InterPro" id="IPR022695">
    <property type="entry name" value="Histidinol_DH_monofunct"/>
</dbReference>
<dbReference type="InterPro" id="IPR012131">
    <property type="entry name" value="Hstdl_DH"/>
</dbReference>
<dbReference type="NCBIfam" id="TIGR00069">
    <property type="entry name" value="hisD"/>
    <property type="match status" value="1"/>
</dbReference>
<dbReference type="PANTHER" id="PTHR21256:SF2">
    <property type="entry name" value="HISTIDINE BIOSYNTHESIS TRIFUNCTIONAL PROTEIN"/>
    <property type="match status" value="1"/>
</dbReference>
<dbReference type="PANTHER" id="PTHR21256">
    <property type="entry name" value="HISTIDINOL DEHYDROGENASE HDH"/>
    <property type="match status" value="1"/>
</dbReference>
<dbReference type="Pfam" id="PF00815">
    <property type="entry name" value="Histidinol_dh"/>
    <property type="match status" value="1"/>
</dbReference>
<dbReference type="PIRSF" id="PIRSF000099">
    <property type="entry name" value="Histidinol_dh"/>
    <property type="match status" value="1"/>
</dbReference>
<dbReference type="PRINTS" id="PR00083">
    <property type="entry name" value="HOLDHDRGNASE"/>
</dbReference>
<dbReference type="SUPFAM" id="SSF53720">
    <property type="entry name" value="ALDH-like"/>
    <property type="match status" value="1"/>
</dbReference>
<dbReference type="PROSITE" id="PS00611">
    <property type="entry name" value="HISOL_DEHYDROGENASE"/>
    <property type="match status" value="1"/>
</dbReference>
<accession>Q8DTQ7</accession>
<name>HISX_STRMU</name>
<sequence length="427" mass="46451">MKRLTGTNEKISNILYQEQLELSKENLDVEATVREIIEKVKEEGDEALRAYSEKFDHVVLSELHVSDQVVNEAFDKIDKDVLTALENAKANIESYHKQQLKGGFEDQPSQGVLRGQLIRPIERVGVYVPGGTAAYPSSVLMNVIPAKIAGVKEIIMITPPQEHFVPAILVAAKLAGVDKIYQVGGAQGIAALAYGTQTLPKVDKITGPGNIFVATAKKLVYGVVGIDMIAGPSEIGVIADSTANPVYVAADLLSQAEHDVHARAILVTNSAELADAVELEIEKQLQTLPRQAIARPSIENNGRIIIAQDVESMFELMNLVAPEHLEIAIDKAYDYLERVQNAGSIFLGHYTSEPIGDYYAGANHVLPTTATSRFSSALGVHDFVKRIQYTQYSKAAVNAAEKDITTLAYAEGLQAHARAIEVRNDKN</sequence>
<evidence type="ECO:0000255" key="1">
    <source>
        <dbReference type="HAMAP-Rule" id="MF_01024"/>
    </source>
</evidence>
<comment type="function">
    <text evidence="1">Catalyzes the sequential NAD-dependent oxidations of L-histidinol to L-histidinaldehyde and then to L-histidine.</text>
</comment>
<comment type="catalytic activity">
    <reaction evidence="1">
        <text>L-histidinol + 2 NAD(+) + H2O = L-histidine + 2 NADH + 3 H(+)</text>
        <dbReference type="Rhea" id="RHEA:20641"/>
        <dbReference type="ChEBI" id="CHEBI:15377"/>
        <dbReference type="ChEBI" id="CHEBI:15378"/>
        <dbReference type="ChEBI" id="CHEBI:57540"/>
        <dbReference type="ChEBI" id="CHEBI:57595"/>
        <dbReference type="ChEBI" id="CHEBI:57699"/>
        <dbReference type="ChEBI" id="CHEBI:57945"/>
        <dbReference type="EC" id="1.1.1.23"/>
    </reaction>
</comment>
<comment type="cofactor">
    <cofactor evidence="1">
        <name>Zn(2+)</name>
        <dbReference type="ChEBI" id="CHEBI:29105"/>
    </cofactor>
    <text evidence="1">Binds 1 zinc ion per subunit.</text>
</comment>
<comment type="pathway">
    <text evidence="1">Amino-acid biosynthesis; L-histidine biosynthesis; L-histidine from 5-phospho-alpha-D-ribose 1-diphosphate: step 9/9.</text>
</comment>
<comment type="similarity">
    <text evidence="1">Belongs to the histidinol dehydrogenase family.</text>
</comment>
<feature type="chain" id="PRO_0000135858" description="Histidinol dehydrogenase">
    <location>
        <begin position="1"/>
        <end position="427"/>
    </location>
</feature>
<feature type="active site" description="Proton acceptor" evidence="1">
    <location>
        <position position="323"/>
    </location>
</feature>
<feature type="active site" description="Proton acceptor" evidence="1">
    <location>
        <position position="324"/>
    </location>
</feature>
<feature type="binding site" evidence="1">
    <location>
        <position position="127"/>
    </location>
    <ligand>
        <name>NAD(+)</name>
        <dbReference type="ChEBI" id="CHEBI:57540"/>
    </ligand>
</feature>
<feature type="binding site" evidence="1">
    <location>
        <position position="187"/>
    </location>
    <ligand>
        <name>NAD(+)</name>
        <dbReference type="ChEBI" id="CHEBI:57540"/>
    </ligand>
</feature>
<feature type="binding site" evidence="1">
    <location>
        <position position="210"/>
    </location>
    <ligand>
        <name>NAD(+)</name>
        <dbReference type="ChEBI" id="CHEBI:57540"/>
    </ligand>
</feature>
<feature type="binding site" evidence="1">
    <location>
        <position position="233"/>
    </location>
    <ligand>
        <name>substrate</name>
    </ligand>
</feature>
<feature type="binding site" evidence="1">
    <location>
        <position position="255"/>
    </location>
    <ligand>
        <name>substrate</name>
    </ligand>
</feature>
<feature type="binding site" evidence="1">
    <location>
        <position position="255"/>
    </location>
    <ligand>
        <name>Zn(2+)</name>
        <dbReference type="ChEBI" id="CHEBI:29105"/>
    </ligand>
</feature>
<feature type="binding site" evidence="1">
    <location>
        <position position="258"/>
    </location>
    <ligand>
        <name>substrate</name>
    </ligand>
</feature>
<feature type="binding site" evidence="1">
    <location>
        <position position="258"/>
    </location>
    <ligand>
        <name>Zn(2+)</name>
        <dbReference type="ChEBI" id="CHEBI:29105"/>
    </ligand>
</feature>
<feature type="binding site" evidence="1">
    <location>
        <position position="324"/>
    </location>
    <ligand>
        <name>substrate</name>
    </ligand>
</feature>
<feature type="binding site" evidence="1">
    <location>
        <position position="357"/>
    </location>
    <ligand>
        <name>substrate</name>
    </ligand>
</feature>
<feature type="binding site" evidence="1">
    <location>
        <position position="357"/>
    </location>
    <ligand>
        <name>Zn(2+)</name>
        <dbReference type="ChEBI" id="CHEBI:29105"/>
    </ligand>
</feature>
<feature type="binding site" evidence="1">
    <location>
        <position position="411"/>
    </location>
    <ligand>
        <name>substrate</name>
    </ligand>
</feature>
<feature type="binding site" evidence="1">
    <location>
        <position position="416"/>
    </location>
    <ligand>
        <name>substrate</name>
    </ligand>
</feature>
<feature type="binding site" evidence="1">
    <location>
        <position position="416"/>
    </location>
    <ligand>
        <name>Zn(2+)</name>
        <dbReference type="ChEBI" id="CHEBI:29105"/>
    </ligand>
</feature>